<keyword id="KW-0119">Carbohydrate metabolism</keyword>
<keyword id="KW-0963">Cytoplasm</keyword>
<keyword id="KW-0413">Isomerase</keyword>
<keyword id="KW-0479">Metal-binding</keyword>
<keyword id="KW-0862">Zinc</keyword>
<gene>
    <name evidence="1" type="primary">gmhA</name>
    <name type="ordered locus">ECUMN_0243</name>
</gene>
<proteinExistence type="inferred from homology"/>
<reference key="1">
    <citation type="journal article" date="2009" name="PLoS Genet.">
        <title>Organised genome dynamics in the Escherichia coli species results in highly diverse adaptive paths.</title>
        <authorList>
            <person name="Touchon M."/>
            <person name="Hoede C."/>
            <person name="Tenaillon O."/>
            <person name="Barbe V."/>
            <person name="Baeriswyl S."/>
            <person name="Bidet P."/>
            <person name="Bingen E."/>
            <person name="Bonacorsi S."/>
            <person name="Bouchier C."/>
            <person name="Bouvet O."/>
            <person name="Calteau A."/>
            <person name="Chiapello H."/>
            <person name="Clermont O."/>
            <person name="Cruveiller S."/>
            <person name="Danchin A."/>
            <person name="Diard M."/>
            <person name="Dossat C."/>
            <person name="Karoui M.E."/>
            <person name="Frapy E."/>
            <person name="Garry L."/>
            <person name="Ghigo J.M."/>
            <person name="Gilles A.M."/>
            <person name="Johnson J."/>
            <person name="Le Bouguenec C."/>
            <person name="Lescat M."/>
            <person name="Mangenot S."/>
            <person name="Martinez-Jehanne V."/>
            <person name="Matic I."/>
            <person name="Nassif X."/>
            <person name="Oztas S."/>
            <person name="Petit M.A."/>
            <person name="Pichon C."/>
            <person name="Rouy Z."/>
            <person name="Ruf C.S."/>
            <person name="Schneider D."/>
            <person name="Tourret J."/>
            <person name="Vacherie B."/>
            <person name="Vallenet D."/>
            <person name="Medigue C."/>
            <person name="Rocha E.P.C."/>
            <person name="Denamur E."/>
        </authorList>
    </citation>
    <scope>NUCLEOTIDE SEQUENCE [LARGE SCALE GENOMIC DNA]</scope>
    <source>
        <strain>UMN026 / ExPEC</strain>
    </source>
</reference>
<accession>B7N8A8</accession>
<evidence type="ECO:0000255" key="1">
    <source>
        <dbReference type="HAMAP-Rule" id="MF_00067"/>
    </source>
</evidence>
<dbReference type="EC" id="5.3.1.28" evidence="1"/>
<dbReference type="EMBL" id="CU928163">
    <property type="protein sequence ID" value="CAR11458.1"/>
    <property type="molecule type" value="Genomic_DNA"/>
</dbReference>
<dbReference type="RefSeq" id="YP_002411014.1">
    <property type="nucleotide sequence ID" value="NC_011751.1"/>
</dbReference>
<dbReference type="SMR" id="B7N8A8"/>
<dbReference type="STRING" id="585056.ECUMN_0243"/>
<dbReference type="KEGG" id="eum:ECUMN_0243"/>
<dbReference type="PATRIC" id="fig|585056.7.peg.433"/>
<dbReference type="HOGENOM" id="CLU_080999_4_0_6"/>
<dbReference type="UniPathway" id="UPA00041">
    <property type="reaction ID" value="UER00436"/>
</dbReference>
<dbReference type="Proteomes" id="UP000007097">
    <property type="component" value="Chromosome"/>
</dbReference>
<dbReference type="GO" id="GO:0005737">
    <property type="term" value="C:cytoplasm"/>
    <property type="evidence" value="ECO:0007669"/>
    <property type="project" value="UniProtKB-SubCell"/>
</dbReference>
<dbReference type="GO" id="GO:0097367">
    <property type="term" value="F:carbohydrate derivative binding"/>
    <property type="evidence" value="ECO:0007669"/>
    <property type="project" value="InterPro"/>
</dbReference>
<dbReference type="GO" id="GO:0008968">
    <property type="term" value="F:D-sedoheptulose 7-phosphate isomerase activity"/>
    <property type="evidence" value="ECO:0007669"/>
    <property type="project" value="UniProtKB-UniRule"/>
</dbReference>
<dbReference type="GO" id="GO:0008270">
    <property type="term" value="F:zinc ion binding"/>
    <property type="evidence" value="ECO:0007669"/>
    <property type="project" value="UniProtKB-UniRule"/>
</dbReference>
<dbReference type="GO" id="GO:0005975">
    <property type="term" value="P:carbohydrate metabolic process"/>
    <property type="evidence" value="ECO:0007669"/>
    <property type="project" value="UniProtKB-UniRule"/>
</dbReference>
<dbReference type="GO" id="GO:2001061">
    <property type="term" value="P:D-glycero-D-manno-heptose 7-phosphate biosynthetic process"/>
    <property type="evidence" value="ECO:0007669"/>
    <property type="project" value="UniProtKB-UniPathway"/>
</dbReference>
<dbReference type="CDD" id="cd05006">
    <property type="entry name" value="SIS_GmhA"/>
    <property type="match status" value="1"/>
</dbReference>
<dbReference type="FunFam" id="3.40.50.10490:FF:000013">
    <property type="entry name" value="Phosphoheptose isomerase"/>
    <property type="match status" value="1"/>
</dbReference>
<dbReference type="Gene3D" id="3.40.50.10490">
    <property type="entry name" value="Glucose-6-phosphate isomerase like protein, domain 1"/>
    <property type="match status" value="1"/>
</dbReference>
<dbReference type="HAMAP" id="MF_00067">
    <property type="entry name" value="GmhA"/>
    <property type="match status" value="1"/>
</dbReference>
<dbReference type="InterPro" id="IPR035461">
    <property type="entry name" value="GmhA/DiaA"/>
</dbReference>
<dbReference type="InterPro" id="IPR004515">
    <property type="entry name" value="Phosphoheptose_Isoase"/>
</dbReference>
<dbReference type="InterPro" id="IPR001347">
    <property type="entry name" value="SIS_dom"/>
</dbReference>
<dbReference type="InterPro" id="IPR046348">
    <property type="entry name" value="SIS_dom_sf"/>
</dbReference>
<dbReference type="InterPro" id="IPR050099">
    <property type="entry name" value="SIS_GmhA/DiaA_subfam"/>
</dbReference>
<dbReference type="NCBIfam" id="TIGR00441">
    <property type="entry name" value="gmhA"/>
    <property type="match status" value="1"/>
</dbReference>
<dbReference type="NCBIfam" id="NF001628">
    <property type="entry name" value="PRK00414.1"/>
    <property type="match status" value="1"/>
</dbReference>
<dbReference type="PANTHER" id="PTHR30390:SF7">
    <property type="entry name" value="PHOSPHOHEPTOSE ISOMERASE"/>
    <property type="match status" value="1"/>
</dbReference>
<dbReference type="PANTHER" id="PTHR30390">
    <property type="entry name" value="SEDOHEPTULOSE 7-PHOSPHATE ISOMERASE / DNAA INITIATOR-ASSOCIATING FACTOR FOR REPLICATION INITIATION"/>
    <property type="match status" value="1"/>
</dbReference>
<dbReference type="Pfam" id="PF13580">
    <property type="entry name" value="SIS_2"/>
    <property type="match status" value="1"/>
</dbReference>
<dbReference type="SUPFAM" id="SSF53697">
    <property type="entry name" value="SIS domain"/>
    <property type="match status" value="1"/>
</dbReference>
<dbReference type="PROSITE" id="PS51464">
    <property type="entry name" value="SIS"/>
    <property type="match status" value="1"/>
</dbReference>
<feature type="chain" id="PRO_1000197000" description="Phosphoheptose isomerase">
    <location>
        <begin position="1"/>
        <end position="192"/>
    </location>
</feature>
<feature type="domain" description="SIS" evidence="1">
    <location>
        <begin position="37"/>
        <end position="192"/>
    </location>
</feature>
<feature type="binding site" evidence="1">
    <location>
        <begin position="52"/>
        <end position="54"/>
    </location>
    <ligand>
        <name>substrate</name>
    </ligand>
</feature>
<feature type="binding site" evidence="1">
    <location>
        <position position="61"/>
    </location>
    <ligand>
        <name>Zn(2+)</name>
        <dbReference type="ChEBI" id="CHEBI:29105"/>
    </ligand>
</feature>
<feature type="binding site" evidence="1">
    <location>
        <position position="65"/>
    </location>
    <ligand>
        <name>substrate</name>
    </ligand>
</feature>
<feature type="binding site" evidence="1">
    <location>
        <position position="65"/>
    </location>
    <ligand>
        <name>Zn(2+)</name>
        <dbReference type="ChEBI" id="CHEBI:29105"/>
    </ligand>
</feature>
<feature type="binding site" evidence="1">
    <location>
        <begin position="93"/>
        <end position="94"/>
    </location>
    <ligand>
        <name>substrate</name>
    </ligand>
</feature>
<feature type="binding site" evidence="1">
    <location>
        <begin position="119"/>
        <end position="121"/>
    </location>
    <ligand>
        <name>substrate</name>
    </ligand>
</feature>
<feature type="binding site" evidence="1">
    <location>
        <position position="124"/>
    </location>
    <ligand>
        <name>substrate</name>
    </ligand>
</feature>
<feature type="binding site" evidence="1">
    <location>
        <position position="172"/>
    </location>
    <ligand>
        <name>substrate</name>
    </ligand>
</feature>
<feature type="binding site" evidence="1">
    <location>
        <position position="172"/>
    </location>
    <ligand>
        <name>Zn(2+)</name>
        <dbReference type="ChEBI" id="CHEBI:29105"/>
    </ligand>
</feature>
<feature type="binding site" evidence="1">
    <location>
        <position position="180"/>
    </location>
    <ligand>
        <name>Zn(2+)</name>
        <dbReference type="ChEBI" id="CHEBI:29105"/>
    </ligand>
</feature>
<organism>
    <name type="scientific">Escherichia coli O17:K52:H18 (strain UMN026 / ExPEC)</name>
    <dbReference type="NCBI Taxonomy" id="585056"/>
    <lineage>
        <taxon>Bacteria</taxon>
        <taxon>Pseudomonadati</taxon>
        <taxon>Pseudomonadota</taxon>
        <taxon>Gammaproteobacteria</taxon>
        <taxon>Enterobacterales</taxon>
        <taxon>Enterobacteriaceae</taxon>
        <taxon>Escherichia</taxon>
    </lineage>
</organism>
<sequence length="192" mass="20815">MYQDLIRNELNEAAETLANFLKDDANIHAIQRAAVLLADSFKAGGKVLSCGNGGSHCDAMHFAEELTGRYRENRPGYPAIAISDVSHISCVGNDFGFNDIFSRYVEAVGREGDVLLGISTSGNSANVIKAIAAAREKGMKVITLTGKDGGKMAGTADIEIRVPHFGYADRIQEIHIKVIHILIQLIEKEMVK</sequence>
<comment type="function">
    <text evidence="1">Catalyzes the isomerization of sedoheptulose 7-phosphate in D-glycero-D-manno-heptose 7-phosphate.</text>
</comment>
<comment type="catalytic activity">
    <reaction evidence="1">
        <text>2 D-sedoheptulose 7-phosphate = D-glycero-alpha-D-manno-heptose 7-phosphate + D-glycero-beta-D-manno-heptose 7-phosphate</text>
        <dbReference type="Rhea" id="RHEA:27489"/>
        <dbReference type="ChEBI" id="CHEBI:57483"/>
        <dbReference type="ChEBI" id="CHEBI:60203"/>
        <dbReference type="ChEBI" id="CHEBI:60204"/>
        <dbReference type="EC" id="5.3.1.28"/>
    </reaction>
</comment>
<comment type="cofactor">
    <cofactor evidence="1">
        <name>Zn(2+)</name>
        <dbReference type="ChEBI" id="CHEBI:29105"/>
    </cofactor>
    <text evidence="1">Binds 1 zinc ion per subunit.</text>
</comment>
<comment type="pathway">
    <text evidence="1">Carbohydrate biosynthesis; D-glycero-D-manno-heptose 7-phosphate biosynthesis; D-glycero-alpha-D-manno-heptose 7-phosphate and D-glycero-beta-D-manno-heptose 7-phosphate from sedoheptulose 7-phosphate: step 1/1.</text>
</comment>
<comment type="subunit">
    <text evidence="1">Homotetramer.</text>
</comment>
<comment type="subcellular location">
    <subcellularLocation>
        <location evidence="1">Cytoplasm</location>
    </subcellularLocation>
</comment>
<comment type="miscellaneous">
    <text evidence="1">The reaction produces a racemic mixture of D-glycero-alpha-D-manno-heptose 7-phosphate and D-glycero-beta-D-manno-heptose 7-phosphate.</text>
</comment>
<comment type="similarity">
    <text evidence="1">Belongs to the SIS family. GmhA subfamily.</text>
</comment>
<name>GMHA_ECOLU</name>
<protein>
    <recommendedName>
        <fullName evidence="1">Phosphoheptose isomerase</fullName>
        <ecNumber evidence="1">5.3.1.28</ecNumber>
    </recommendedName>
    <alternativeName>
        <fullName evidence="1">Sedoheptulose 7-phosphate isomerase</fullName>
    </alternativeName>
</protein>